<accession>Q7NHG9</accession>
<organism>
    <name type="scientific">Gloeobacter violaceus (strain ATCC 29082 / PCC 7421)</name>
    <dbReference type="NCBI Taxonomy" id="251221"/>
    <lineage>
        <taxon>Bacteria</taxon>
        <taxon>Bacillati</taxon>
        <taxon>Cyanobacteriota</taxon>
        <taxon>Cyanophyceae</taxon>
        <taxon>Gloeobacterales</taxon>
        <taxon>Gloeobacteraceae</taxon>
        <taxon>Gloeobacter</taxon>
    </lineage>
</organism>
<gene>
    <name evidence="1" type="primary">atpC</name>
    <name type="ordered locus">gll2568</name>
</gene>
<name>ATPE_GLOVI</name>
<sequence>MALQIKIVAPNKVVFDDQVDEVVLPSVSGQLGILTNHAPLITGLSNGVMRVRKQGTFIPIAVLTGVAEVDNNEVSVVAMAAELGSGIDVDRARAALARAEQTLATSQNKTELLQAQTALERANARLRAAGAL</sequence>
<protein>
    <recommendedName>
        <fullName evidence="1">ATP synthase epsilon chain</fullName>
    </recommendedName>
    <alternativeName>
        <fullName evidence="1">ATP synthase F1 sector epsilon subunit</fullName>
    </alternativeName>
    <alternativeName>
        <fullName evidence="1">F-ATPase epsilon subunit</fullName>
    </alternativeName>
</protein>
<feature type="chain" id="PRO_0000188140" description="ATP synthase epsilon chain">
    <location>
        <begin position="1"/>
        <end position="132"/>
    </location>
</feature>
<evidence type="ECO:0000255" key="1">
    <source>
        <dbReference type="HAMAP-Rule" id="MF_00530"/>
    </source>
</evidence>
<dbReference type="EMBL" id="BA000045">
    <property type="protein sequence ID" value="BAC90509.1"/>
    <property type="molecule type" value="Genomic_DNA"/>
</dbReference>
<dbReference type="RefSeq" id="NP_925514.1">
    <property type="nucleotide sequence ID" value="NC_005125.1"/>
</dbReference>
<dbReference type="RefSeq" id="WP_011142562.1">
    <property type="nucleotide sequence ID" value="NC_005125.1"/>
</dbReference>
<dbReference type="SMR" id="Q7NHG9"/>
<dbReference type="FunCoup" id="Q7NHG9">
    <property type="interactions" value="197"/>
</dbReference>
<dbReference type="STRING" id="251221.gene:10760068"/>
<dbReference type="EnsemblBacteria" id="BAC90509">
    <property type="protein sequence ID" value="BAC90509"/>
    <property type="gene ID" value="BAC90509"/>
</dbReference>
<dbReference type="KEGG" id="gvi:gll2568"/>
<dbReference type="PATRIC" id="fig|251221.4.peg.2606"/>
<dbReference type="eggNOG" id="COG0355">
    <property type="taxonomic scope" value="Bacteria"/>
</dbReference>
<dbReference type="HOGENOM" id="CLU_084338_1_2_3"/>
<dbReference type="InParanoid" id="Q7NHG9"/>
<dbReference type="OrthoDB" id="9804110at2"/>
<dbReference type="PhylomeDB" id="Q7NHG9"/>
<dbReference type="Proteomes" id="UP000000557">
    <property type="component" value="Chromosome"/>
</dbReference>
<dbReference type="GO" id="GO:0005886">
    <property type="term" value="C:plasma membrane"/>
    <property type="evidence" value="ECO:0007669"/>
    <property type="project" value="UniProtKB-SubCell"/>
</dbReference>
<dbReference type="GO" id="GO:0045259">
    <property type="term" value="C:proton-transporting ATP synthase complex"/>
    <property type="evidence" value="ECO:0007669"/>
    <property type="project" value="UniProtKB-KW"/>
</dbReference>
<dbReference type="GO" id="GO:0005524">
    <property type="term" value="F:ATP binding"/>
    <property type="evidence" value="ECO:0007669"/>
    <property type="project" value="UniProtKB-UniRule"/>
</dbReference>
<dbReference type="GO" id="GO:0046933">
    <property type="term" value="F:proton-transporting ATP synthase activity, rotational mechanism"/>
    <property type="evidence" value="ECO:0007669"/>
    <property type="project" value="UniProtKB-UniRule"/>
</dbReference>
<dbReference type="GO" id="GO:0015986">
    <property type="term" value="P:proton motive force-driven ATP synthesis"/>
    <property type="evidence" value="ECO:0000318"/>
    <property type="project" value="GO_Central"/>
</dbReference>
<dbReference type="CDD" id="cd12152">
    <property type="entry name" value="F1-ATPase_delta"/>
    <property type="match status" value="1"/>
</dbReference>
<dbReference type="Gene3D" id="1.20.5.440">
    <property type="entry name" value="ATP synthase delta/epsilon subunit, C-terminal domain"/>
    <property type="match status" value="1"/>
</dbReference>
<dbReference type="Gene3D" id="2.60.15.10">
    <property type="entry name" value="F0F1 ATP synthase delta/epsilon subunit, N-terminal"/>
    <property type="match status" value="1"/>
</dbReference>
<dbReference type="HAMAP" id="MF_00530">
    <property type="entry name" value="ATP_synth_epsil_bac"/>
    <property type="match status" value="1"/>
</dbReference>
<dbReference type="InterPro" id="IPR036794">
    <property type="entry name" value="ATP_F1_dsu/esu_C_sf"/>
</dbReference>
<dbReference type="InterPro" id="IPR001469">
    <property type="entry name" value="ATP_synth_F1_dsu/esu"/>
</dbReference>
<dbReference type="InterPro" id="IPR020546">
    <property type="entry name" value="ATP_synth_F1_dsu/esu_N"/>
</dbReference>
<dbReference type="InterPro" id="IPR020547">
    <property type="entry name" value="ATP_synth_F1_esu_C"/>
</dbReference>
<dbReference type="InterPro" id="IPR036771">
    <property type="entry name" value="ATPsynth_dsu/esu_N"/>
</dbReference>
<dbReference type="NCBIfam" id="TIGR01216">
    <property type="entry name" value="ATP_synt_epsi"/>
    <property type="match status" value="1"/>
</dbReference>
<dbReference type="PANTHER" id="PTHR13822">
    <property type="entry name" value="ATP SYNTHASE DELTA/EPSILON CHAIN"/>
    <property type="match status" value="1"/>
</dbReference>
<dbReference type="PANTHER" id="PTHR13822:SF10">
    <property type="entry name" value="ATP SYNTHASE EPSILON CHAIN, CHLOROPLASTIC"/>
    <property type="match status" value="1"/>
</dbReference>
<dbReference type="Pfam" id="PF00401">
    <property type="entry name" value="ATP-synt_DE"/>
    <property type="match status" value="1"/>
</dbReference>
<dbReference type="Pfam" id="PF02823">
    <property type="entry name" value="ATP-synt_DE_N"/>
    <property type="match status" value="1"/>
</dbReference>
<dbReference type="SUPFAM" id="SSF46604">
    <property type="entry name" value="Epsilon subunit of F1F0-ATP synthase C-terminal domain"/>
    <property type="match status" value="1"/>
</dbReference>
<dbReference type="SUPFAM" id="SSF51344">
    <property type="entry name" value="Epsilon subunit of F1F0-ATP synthase N-terminal domain"/>
    <property type="match status" value="1"/>
</dbReference>
<keyword id="KW-0066">ATP synthesis</keyword>
<keyword id="KW-0997">Cell inner membrane</keyword>
<keyword id="KW-1003">Cell membrane</keyword>
<keyword id="KW-0139">CF(1)</keyword>
<keyword id="KW-0375">Hydrogen ion transport</keyword>
<keyword id="KW-0406">Ion transport</keyword>
<keyword id="KW-0472">Membrane</keyword>
<keyword id="KW-1185">Reference proteome</keyword>
<keyword id="KW-0813">Transport</keyword>
<proteinExistence type="inferred from homology"/>
<reference key="1">
    <citation type="journal article" date="2003" name="DNA Res.">
        <title>Complete genome structure of Gloeobacter violaceus PCC 7421, a cyanobacterium that lacks thylakoids.</title>
        <authorList>
            <person name="Nakamura Y."/>
            <person name="Kaneko T."/>
            <person name="Sato S."/>
            <person name="Mimuro M."/>
            <person name="Miyashita H."/>
            <person name="Tsuchiya T."/>
            <person name="Sasamoto S."/>
            <person name="Watanabe A."/>
            <person name="Kawashima K."/>
            <person name="Kishida Y."/>
            <person name="Kiyokawa C."/>
            <person name="Kohara M."/>
            <person name="Matsumoto M."/>
            <person name="Matsuno A."/>
            <person name="Nakazaki N."/>
            <person name="Shimpo S."/>
            <person name="Takeuchi C."/>
            <person name="Yamada M."/>
            <person name="Tabata S."/>
        </authorList>
    </citation>
    <scope>NUCLEOTIDE SEQUENCE [LARGE SCALE GENOMIC DNA]</scope>
    <source>
        <strain>ATCC 29082 / PCC 7421</strain>
    </source>
</reference>
<comment type="function">
    <text evidence="1">Produces ATP from ADP in the presence of a proton gradient across the membrane.</text>
</comment>
<comment type="subunit">
    <text>F-type ATPases have 2 components, CF(1) - the catalytic core - and CF(0) - the membrane proton channel. CF(1) has five subunits: alpha(3), beta(3), gamma(1), delta(1), epsilon(1). CF(0) has three main subunits: a, b and c.</text>
</comment>
<comment type="subcellular location">
    <subcellularLocation>
        <location evidence="1">Cell inner membrane</location>
        <topology evidence="1">Peripheral membrane protein</topology>
    </subcellularLocation>
</comment>
<comment type="similarity">
    <text evidence="1">Belongs to the ATPase epsilon chain family.</text>
</comment>